<keyword id="KW-0256">Endoplasmic reticulum</keyword>
<keyword id="KW-0325">Glycoprotein</keyword>
<keyword id="KW-0328">Glycosyltransferase</keyword>
<keyword id="KW-0460">Magnesium</keyword>
<keyword id="KW-0472">Membrane</keyword>
<keyword id="KW-0479">Metal-binding</keyword>
<keyword id="KW-1185">Reference proteome</keyword>
<keyword id="KW-0808">Transferase</keyword>
<keyword id="KW-0812">Transmembrane</keyword>
<keyword id="KW-1133">Transmembrane helix</keyword>
<accession>P24140</accession>
<accession>G3I967</accession>
<protein>
    <recommendedName>
        <fullName>UDP-N-acetylglucosamine--dolichyl-phosphate N-acetylglucosaminephosphotransferase</fullName>
        <ecNumber evidence="4 5">2.7.8.15</ecNumber>
    </recommendedName>
    <alternativeName>
        <fullName>GlcNAc-1-P transferase</fullName>
        <shortName>G1PT</shortName>
        <shortName>GPT</shortName>
    </alternativeName>
    <alternativeName>
        <fullName>N-acetylglucosamine-1-phosphate transferase</fullName>
    </alternativeName>
</protein>
<sequence length="408" mass="46250">MWAFPELPLPLLVNLFGSLLGFVATVTLIPAFRSHFIAARLCGQDLNKLSRQQIPESQGVICGAVFLIILFCFIPFPFLNCFVEEQCKAFPHHEFVALIGALLAICCMIFLGFADDVLNLRWRHKLLLPTAASLPLLMVYFTNFGNTTIVVPKPFRWILGLHLDLGILYYVYMGLLAVFCTNAINILAGINGLEAGQSLVISASIIVFNLVELEGDYRDDHVFSLYFMIPFFFTTLGLLYHNWYPSQVFVGDTFCYFAGMTFAVVGILGHFSKTMLLFFIPQVFNFLYSLPQLLHAIPCPRHRIPRLNPKTGKLEMSYSKFKTKNLSFLGTFILKVAERLQLVTVHRGESEDGAFTECNNMTLINLLLKIFGPIHERNLTLLLLLLQILSSAVTFSIRYQLVRLFYDV</sequence>
<gene>
    <name type="primary">DPAGT1</name>
    <name type="synonym">DPAGT2</name>
    <name type="synonym">GNPTA</name>
    <name type="synonym">GTR2</name>
</gene>
<dbReference type="EC" id="2.7.8.15" evidence="4 5"/>
<dbReference type="EMBL" id="M36899">
    <property type="protein sequence ID" value="AAA37027.1"/>
    <property type="molecule type" value="mRNA"/>
</dbReference>
<dbReference type="EMBL" id="U15161">
    <property type="protein sequence ID" value="AAA51872.1"/>
    <property type="molecule type" value="Genomic_DNA"/>
</dbReference>
<dbReference type="EMBL" id="U09453">
    <property type="protein sequence ID" value="AAA85220.1"/>
    <property type="molecule type" value="Genomic_DNA"/>
</dbReference>
<dbReference type="EMBL" id="JH001575">
    <property type="protein sequence ID" value="EGV99104.1"/>
    <property type="molecule type" value="Genomic_DNA"/>
</dbReference>
<dbReference type="RefSeq" id="NP_001230970.1">
    <property type="nucleotide sequence ID" value="NM_001244041.1"/>
</dbReference>
<dbReference type="SMR" id="P24140"/>
<dbReference type="GlyCosmos" id="P24140">
    <property type="glycosylation" value="1 site, No reported glycans"/>
</dbReference>
<dbReference type="PaxDb" id="10029-NP_001230970.1"/>
<dbReference type="Ensembl" id="ENSCGRT00001005610.1">
    <property type="protein sequence ID" value="ENSCGRP00001003822.1"/>
    <property type="gene ID" value="ENSCGRG00001004728.1"/>
</dbReference>
<dbReference type="GeneID" id="100689054"/>
<dbReference type="KEGG" id="cge:100689054"/>
<dbReference type="CTD" id="1798"/>
<dbReference type="eggNOG" id="KOG2788">
    <property type="taxonomic scope" value="Eukaryota"/>
</dbReference>
<dbReference type="GeneTree" id="ENSGT00390000011424"/>
<dbReference type="InParanoid" id="G3I967"/>
<dbReference type="OMA" id="LPHFNAR"/>
<dbReference type="OrthoDB" id="10262326at2759"/>
<dbReference type="UniPathway" id="UPA00378"/>
<dbReference type="Proteomes" id="UP000001075">
    <property type="component" value="Unassembled WGS sequence"/>
</dbReference>
<dbReference type="Proteomes" id="UP000694386">
    <property type="component" value="Unplaced"/>
</dbReference>
<dbReference type="Proteomes" id="UP001108280">
    <property type="component" value="Chromosome 4"/>
</dbReference>
<dbReference type="GO" id="GO:0005789">
    <property type="term" value="C:endoplasmic reticulum membrane"/>
    <property type="evidence" value="ECO:0000314"/>
    <property type="project" value="UniProtKB"/>
</dbReference>
<dbReference type="GO" id="GO:0016020">
    <property type="term" value="C:membrane"/>
    <property type="evidence" value="ECO:0000314"/>
    <property type="project" value="UniProtKB"/>
</dbReference>
<dbReference type="GO" id="GO:0016757">
    <property type="term" value="F:glycosyltransferase activity"/>
    <property type="evidence" value="ECO:0007669"/>
    <property type="project" value="UniProtKB-KW"/>
</dbReference>
<dbReference type="GO" id="GO:0042802">
    <property type="term" value="F:identical protein binding"/>
    <property type="evidence" value="ECO:0000353"/>
    <property type="project" value="UniProtKB"/>
</dbReference>
<dbReference type="GO" id="GO:0046872">
    <property type="term" value="F:metal ion binding"/>
    <property type="evidence" value="ECO:0007669"/>
    <property type="project" value="UniProtKB-KW"/>
</dbReference>
<dbReference type="GO" id="GO:0003975">
    <property type="term" value="F:UDP-N-acetylglucosamine-dolichyl-phosphate N-acetylglucosaminephosphotransferase activity"/>
    <property type="evidence" value="ECO:0000315"/>
    <property type="project" value="UniProtKB"/>
</dbReference>
<dbReference type="GO" id="GO:0003976">
    <property type="term" value="F:UDP-N-acetylglucosamine-lysosomal-enzyme N-acetylglucosaminephosphotransferase activity"/>
    <property type="evidence" value="ECO:0007669"/>
    <property type="project" value="Ensembl"/>
</dbReference>
<dbReference type="GO" id="GO:0019408">
    <property type="term" value="P:dolichol biosynthetic process"/>
    <property type="evidence" value="ECO:0000315"/>
    <property type="project" value="UniProtKB"/>
</dbReference>
<dbReference type="GO" id="GO:0006488">
    <property type="term" value="P:dolichol-linked oligosaccharide biosynthetic process"/>
    <property type="evidence" value="ECO:0000250"/>
    <property type="project" value="UniProtKB"/>
</dbReference>
<dbReference type="CDD" id="cd06855">
    <property type="entry name" value="GT_GPT_euk"/>
    <property type="match status" value="1"/>
</dbReference>
<dbReference type="InterPro" id="IPR048439">
    <property type="entry name" value="DPAGT1_ins"/>
</dbReference>
<dbReference type="InterPro" id="IPR000715">
    <property type="entry name" value="Glycosyl_transferase_4"/>
</dbReference>
<dbReference type="InterPro" id="IPR033895">
    <property type="entry name" value="GPT"/>
</dbReference>
<dbReference type="PANTHER" id="PTHR10571">
    <property type="entry name" value="UDP-N-ACETYLGLUCOSAMINE--DOLICHYL-PHOSPHATE N-ACETYLGLUCOSAMINEPHOSPHOTRANSFERASE"/>
    <property type="match status" value="1"/>
</dbReference>
<dbReference type="PANTHER" id="PTHR10571:SF0">
    <property type="entry name" value="UDP-N-ACETYLGLUCOSAMINE--DOLICHYL-PHOSPHATE N-ACETYLGLUCOSAMINEPHOSPHOTRANSFERASE"/>
    <property type="match status" value="1"/>
</dbReference>
<dbReference type="Pfam" id="PF21383">
    <property type="entry name" value="DPAGT1_ins"/>
    <property type="match status" value="1"/>
</dbReference>
<dbReference type="Pfam" id="PF00953">
    <property type="entry name" value="Glycos_transf_4"/>
    <property type="match status" value="1"/>
</dbReference>
<name>GPT_CRIGR</name>
<comment type="function">
    <text evidence="4 5">UDP-N-acetylglucosamine--dolichyl-phosphate N-acetylglucosaminephosphotransferase that operates in the biosynthetic pathway of dolichol-linked oligosaccharides, the glycan precursors employed in protein asparagine (N)-glycosylation. The assembly of dolichol-linked oligosaccharides begins on the cytosolic side of the endoplasmic reticulum membrane and finishes in its lumen. The sequential addition of sugars to dolichol pyrophosphate produces dolichol-linked oligosaccharides containing fourteen sugars, including two GlcNAcs, nine mannoses and three glucoses. Once assembled, the oligosaccharide is transferred from the lipid to nascent proteins by oligosaccharyltransferases. Catalyzes the initial step of dolichol-linked oligosaccharide biosynthesis, transfering GlcNAc-1-P from cytosolic UDP-GlcNAc onto the carrier lipid dolichyl phosphate (P-dolichol), yielding GlcNAc-P-P-dolichol embedded in the cytoplasmic leaflet of the endoplasmic reticulum membrane.</text>
</comment>
<comment type="catalytic activity">
    <reaction evidence="4 5">
        <text>a di-trans,poly-cis-dolichyl phosphate + UDP-N-acetyl-alpha-D-glucosamine = an N-acetyl-alpha-D-glucosaminyl-diphospho-di-trans,poly-cis-dolichol + UMP</text>
        <dbReference type="Rhea" id="RHEA:13289"/>
        <dbReference type="Rhea" id="RHEA-COMP:19498"/>
        <dbReference type="Rhea" id="RHEA-COMP:19507"/>
        <dbReference type="ChEBI" id="CHEBI:57683"/>
        <dbReference type="ChEBI" id="CHEBI:57705"/>
        <dbReference type="ChEBI" id="CHEBI:57865"/>
        <dbReference type="ChEBI" id="CHEBI:58427"/>
        <dbReference type="EC" id="2.7.8.15"/>
    </reaction>
    <physiologicalReaction direction="left-to-right" evidence="7">
        <dbReference type="Rhea" id="RHEA:13290"/>
    </physiologicalReaction>
</comment>
<comment type="cofactor">
    <cofactor evidence="2">
        <name>Mg(2+)</name>
        <dbReference type="ChEBI" id="CHEBI:18420"/>
    </cofactor>
</comment>
<comment type="activity regulation">
    <text evidence="1">Inhibited by natural nucleoside antibiotic tunicamycin, which acts as a structural analog and competitor of UDP-GlcNAc.</text>
</comment>
<comment type="pathway">
    <text evidence="4 5">Protein modification; protein glycosylation.</text>
</comment>
<comment type="subunit">
    <text evidence="2">Homodimer.</text>
</comment>
<comment type="subcellular location">
    <subcellularLocation>
        <location evidence="1">Endoplasmic reticulum membrane</location>
        <topology evidence="2">Multi-pass membrane protein</topology>
    </subcellularLocation>
</comment>
<comment type="similarity">
    <text evidence="6">Belongs to the glycosyltransferase 4 family.</text>
</comment>
<reference key="1">
    <citation type="journal article" date="1990" name="J. Biol. Chem.">
        <title>Sequence of a cDNA that specifies the uridine diphosphate N-acetyl-D-glucosamine:dolichol phosphate N-acetylglucosamine-1-phosphate transferase from Chinese hamster ovary cells.</title>
        <authorList>
            <person name="Scocca J.R."/>
            <person name="Krag S.S."/>
        </authorList>
    </citation>
    <scope>NUCLEOTIDE SEQUENCE [MRNA]</scope>
    <scope>FUNCTION</scope>
    <scope>CATALYTIC ACTIVITY</scope>
    <scope>PATHWAY</scope>
    <source>
        <tissue>Ovary</tissue>
    </source>
</reference>
<reference key="2">
    <citation type="journal article" date="1995" name="Glycobiology">
        <title>Genomic organization and expression of hamster UDP-N-acetylglucosamine:dolichyl phosphate N-acetylglucosaminyl phosphoryl transferase.</title>
        <authorList>
            <person name="Scocca J.R."/>
            <person name="Zou J."/>
            <person name="Krag S.S."/>
        </authorList>
    </citation>
    <scope>NUCLEOTIDE SEQUENCE [GENOMIC DNA / MRNA]</scope>
    <scope>FUNCTION</scope>
    <scope>CATALYTIC ACTIVITY</scope>
    <scope>PATHWAY</scope>
</reference>
<reference key="3">
    <citation type="journal article" date="2011" name="Nat. Biotechnol.">
        <title>The genomic sequence of the Chinese hamster ovary (CHO)-K1 cell line.</title>
        <authorList>
            <person name="Xu X."/>
            <person name="Nagarajan H."/>
            <person name="Lewis N.E."/>
            <person name="Pan S."/>
            <person name="Cai Z."/>
            <person name="Liu X."/>
            <person name="Chen W."/>
            <person name="Xie M."/>
            <person name="Wang W."/>
            <person name="Hammond S."/>
            <person name="Andersen M.R."/>
            <person name="Neff N."/>
            <person name="Passarelli B."/>
            <person name="Koh W."/>
            <person name="Fan H.C."/>
            <person name="Wang J."/>
            <person name="Gui Y."/>
            <person name="Lee K.H."/>
            <person name="Betenbaugh M.J."/>
            <person name="Quake S.R."/>
            <person name="Famili I."/>
            <person name="Palsson B.O."/>
            <person name="Wang J."/>
        </authorList>
    </citation>
    <scope>NUCLEOTIDE SEQUENCE [LARGE SCALE GENOMIC DNA]</scope>
</reference>
<organism>
    <name type="scientific">Cricetulus griseus</name>
    <name type="common">Chinese hamster</name>
    <name type="synonym">Cricetulus barabensis griseus</name>
    <dbReference type="NCBI Taxonomy" id="10029"/>
    <lineage>
        <taxon>Eukaryota</taxon>
        <taxon>Metazoa</taxon>
        <taxon>Chordata</taxon>
        <taxon>Craniata</taxon>
        <taxon>Vertebrata</taxon>
        <taxon>Euteleostomi</taxon>
        <taxon>Mammalia</taxon>
        <taxon>Eutheria</taxon>
        <taxon>Euarchontoglires</taxon>
        <taxon>Glires</taxon>
        <taxon>Rodentia</taxon>
        <taxon>Myomorpha</taxon>
        <taxon>Muroidea</taxon>
        <taxon>Cricetidae</taxon>
        <taxon>Cricetinae</taxon>
        <taxon>Cricetulus</taxon>
    </lineage>
</organism>
<feature type="chain" id="PRO_0000108760" description="UDP-N-acetylglucosamine--dolichyl-phosphate N-acetylglucosaminephosphotransferase">
    <location>
        <begin position="1"/>
        <end position="408"/>
    </location>
</feature>
<feature type="topological domain" description="Lumenal" evidence="6">
    <location>
        <begin position="1"/>
        <end position="10"/>
    </location>
</feature>
<feature type="transmembrane region" description="Helical; Name=Helix 1" evidence="2">
    <location>
        <begin position="11"/>
        <end position="38"/>
    </location>
</feature>
<feature type="topological domain" description="Cytoplasmic" evidence="6">
    <location>
        <begin position="39"/>
        <end position="58"/>
    </location>
</feature>
<feature type="transmembrane region" description="Helical; Name=Helix 2" evidence="2">
    <location>
        <begin position="59"/>
        <end position="78"/>
    </location>
</feature>
<feature type="topological domain" description="Lumenal" evidence="6">
    <location>
        <begin position="79"/>
        <end position="91"/>
    </location>
</feature>
<feature type="transmembrane region" description="Helical; Name=Helix 3" evidence="2">
    <location>
        <begin position="92"/>
        <end position="118"/>
    </location>
</feature>
<feature type="topological domain" description="Cytoplasmic" evidence="6">
    <location>
        <begin position="119"/>
        <end position="121"/>
    </location>
</feature>
<feature type="transmembrane region" description="Helical; Name=Helix 4" evidence="2">
    <location>
        <begin position="122"/>
        <end position="143"/>
    </location>
</feature>
<feature type="topological domain" description="Lumenal" evidence="6">
    <location>
        <begin position="144"/>
        <end position="166"/>
    </location>
</feature>
<feature type="transmembrane region" description="Helical; Name=Helix 5" evidence="2">
    <location>
        <begin position="167"/>
        <end position="186"/>
    </location>
</feature>
<feature type="topological domain" description="Cytoplasmic" evidence="6">
    <location>
        <begin position="187"/>
        <end position="192"/>
    </location>
</feature>
<feature type="transmembrane region" description="Helical; Name=Helix 6" evidence="2">
    <location>
        <begin position="193"/>
        <end position="213"/>
    </location>
</feature>
<feature type="topological domain" description="Lumenal" evidence="6">
    <location>
        <begin position="214"/>
        <end position="218"/>
    </location>
</feature>
<feature type="transmembrane region" description="Helical; Name=Helix 7" evidence="2">
    <location>
        <begin position="219"/>
        <end position="242"/>
    </location>
</feature>
<feature type="topological domain" description="Cytoplasmic" evidence="6">
    <location>
        <begin position="243"/>
        <end position="250"/>
    </location>
</feature>
<feature type="transmembrane region" description="Helical; Name=Helix 8" evidence="2">
    <location>
        <begin position="251"/>
        <end position="269"/>
    </location>
</feature>
<feature type="topological domain" description="Lumenal" evidence="6">
    <location>
        <begin position="270"/>
        <end position="271"/>
    </location>
</feature>
<feature type="transmembrane region" description="Helical; Name=Helix 9" evidence="2">
    <location>
        <begin position="272"/>
        <end position="293"/>
    </location>
</feature>
<feature type="topological domain" description="Cytoplasmic" evidence="6">
    <location>
        <begin position="294"/>
        <end position="375"/>
    </location>
</feature>
<feature type="transmembrane region" description="Helical; Name=Helix 10" evidence="2">
    <location>
        <begin position="376"/>
        <end position="400"/>
    </location>
</feature>
<feature type="topological domain" description="Lumenal" evidence="6">
    <location>
        <begin position="401"/>
        <end position="408"/>
    </location>
</feature>
<feature type="binding site" evidence="2">
    <location>
        <begin position="44"/>
        <end position="46"/>
    </location>
    <ligand>
        <name>UDP-N-acetyl-alpha-D-glucosamine</name>
        <dbReference type="ChEBI" id="CHEBI:57705"/>
    </ligand>
</feature>
<feature type="binding site" evidence="2">
    <location>
        <position position="56"/>
    </location>
    <ligand>
        <name>UDP-N-acetyl-alpha-D-glucosamine</name>
        <dbReference type="ChEBI" id="CHEBI:57705"/>
    </ligand>
</feature>
<feature type="binding site" evidence="2">
    <location>
        <position position="125"/>
    </location>
    <ligand>
        <name>dolichyl phosphate</name>
        <dbReference type="ChEBI" id="CHEBI:57683"/>
    </ligand>
</feature>
<feature type="binding site" evidence="2">
    <location>
        <begin position="178"/>
        <end position="186"/>
    </location>
    <ligand>
        <name>dolichyl phosphate</name>
        <dbReference type="ChEBI" id="CHEBI:57683"/>
    </ligand>
</feature>
<feature type="binding site" evidence="2">
    <location>
        <position position="185"/>
    </location>
    <ligand>
        <name>Mg(2+)</name>
        <dbReference type="ChEBI" id="CHEBI:18420"/>
    </ligand>
</feature>
<feature type="binding site" evidence="2">
    <location>
        <position position="191"/>
    </location>
    <ligand>
        <name>UDP-N-acetyl-alpha-D-glucosamine</name>
        <dbReference type="ChEBI" id="CHEBI:57705"/>
    </ligand>
</feature>
<feature type="binding site" evidence="2">
    <location>
        <position position="252"/>
    </location>
    <ligand>
        <name>Mg(2+)</name>
        <dbReference type="ChEBI" id="CHEBI:18420"/>
    </ligand>
</feature>
<feature type="binding site" evidence="2">
    <location>
        <begin position="301"/>
        <end position="303"/>
    </location>
    <ligand>
        <name>UDP-N-acetyl-alpha-D-glucosamine</name>
        <dbReference type="ChEBI" id="CHEBI:57705"/>
    </ligand>
</feature>
<feature type="glycosylation site" description="N-linked (GlcNAc...) asparagine" evidence="3">
    <location>
        <position position="146"/>
    </location>
</feature>
<evidence type="ECO:0000250" key="1">
    <source>
        <dbReference type="UniProtKB" id="P23338"/>
    </source>
</evidence>
<evidence type="ECO:0000250" key="2">
    <source>
        <dbReference type="UniProtKB" id="Q9H3H5"/>
    </source>
</evidence>
<evidence type="ECO:0000255" key="3"/>
<evidence type="ECO:0000269" key="4">
    <source>
    </source>
</evidence>
<evidence type="ECO:0000269" key="5">
    <source>
    </source>
</evidence>
<evidence type="ECO:0000305" key="6"/>
<evidence type="ECO:0000305" key="7">
    <source>
    </source>
</evidence>
<proteinExistence type="evidence at protein level"/>